<gene>
    <name evidence="1" type="primary">rnc</name>
    <name type="ordered locus">HAPS_0130</name>
</gene>
<evidence type="ECO:0000255" key="1">
    <source>
        <dbReference type="HAMAP-Rule" id="MF_00104"/>
    </source>
</evidence>
<protein>
    <recommendedName>
        <fullName evidence="1">Ribonuclease 3</fullName>
        <ecNumber evidence="1">3.1.26.3</ecNumber>
    </recommendedName>
    <alternativeName>
        <fullName evidence="1">Ribonuclease III</fullName>
        <shortName evidence="1">RNase III</shortName>
    </alternativeName>
</protein>
<accession>B8F3C7</accession>
<keyword id="KW-0963">Cytoplasm</keyword>
<keyword id="KW-0255">Endonuclease</keyword>
<keyword id="KW-0378">Hydrolase</keyword>
<keyword id="KW-0460">Magnesium</keyword>
<keyword id="KW-0479">Metal-binding</keyword>
<keyword id="KW-0507">mRNA processing</keyword>
<keyword id="KW-0540">Nuclease</keyword>
<keyword id="KW-1185">Reference proteome</keyword>
<keyword id="KW-0694">RNA-binding</keyword>
<keyword id="KW-0698">rRNA processing</keyword>
<keyword id="KW-0699">rRNA-binding</keyword>
<keyword id="KW-0819">tRNA processing</keyword>
<comment type="function">
    <text evidence="1">Digests double-stranded RNA. Involved in the processing of primary rRNA transcript to yield the immediate precursors to the large and small rRNAs (23S and 16S). Processes some mRNAs, and tRNAs when they are encoded in the rRNA operon. Processes pre-crRNA and tracrRNA of type II CRISPR loci if present in the organism.</text>
</comment>
<comment type="catalytic activity">
    <reaction evidence="1">
        <text>Endonucleolytic cleavage to 5'-phosphomonoester.</text>
        <dbReference type="EC" id="3.1.26.3"/>
    </reaction>
</comment>
<comment type="cofactor">
    <cofactor evidence="1">
        <name>Mg(2+)</name>
        <dbReference type="ChEBI" id="CHEBI:18420"/>
    </cofactor>
</comment>
<comment type="subunit">
    <text evidence="1">Homodimer.</text>
</comment>
<comment type="subcellular location">
    <subcellularLocation>
        <location evidence="1">Cytoplasm</location>
    </subcellularLocation>
</comment>
<comment type="similarity">
    <text evidence="1">Belongs to the ribonuclease III family.</text>
</comment>
<feature type="chain" id="PRO_1000118925" description="Ribonuclease 3">
    <location>
        <begin position="1"/>
        <end position="223"/>
    </location>
</feature>
<feature type="domain" description="RNase III" evidence="1">
    <location>
        <begin position="3"/>
        <end position="125"/>
    </location>
</feature>
<feature type="domain" description="DRBM" evidence="1">
    <location>
        <begin position="152"/>
        <end position="222"/>
    </location>
</feature>
<feature type="active site" evidence="1">
    <location>
        <position position="42"/>
    </location>
</feature>
<feature type="active site" evidence="1">
    <location>
        <position position="114"/>
    </location>
</feature>
<feature type="binding site" evidence="1">
    <location>
        <position position="38"/>
    </location>
    <ligand>
        <name>Mg(2+)</name>
        <dbReference type="ChEBI" id="CHEBI:18420"/>
    </ligand>
</feature>
<feature type="binding site" evidence="1">
    <location>
        <position position="111"/>
    </location>
    <ligand>
        <name>Mg(2+)</name>
        <dbReference type="ChEBI" id="CHEBI:18420"/>
    </ligand>
</feature>
<feature type="binding site" evidence="1">
    <location>
        <position position="114"/>
    </location>
    <ligand>
        <name>Mg(2+)</name>
        <dbReference type="ChEBI" id="CHEBI:18420"/>
    </ligand>
</feature>
<dbReference type="EC" id="3.1.26.3" evidence="1"/>
<dbReference type="EMBL" id="CP001321">
    <property type="protein sequence ID" value="ACL31829.1"/>
    <property type="molecule type" value="Genomic_DNA"/>
</dbReference>
<dbReference type="RefSeq" id="WP_012621570.1">
    <property type="nucleotide sequence ID" value="NC_011852.1"/>
</dbReference>
<dbReference type="SMR" id="B8F3C7"/>
<dbReference type="STRING" id="557723.HAPS_0130"/>
<dbReference type="GeneID" id="66618522"/>
<dbReference type="KEGG" id="hap:HAPS_0130"/>
<dbReference type="HOGENOM" id="CLU_000907_1_1_6"/>
<dbReference type="Proteomes" id="UP000006743">
    <property type="component" value="Chromosome"/>
</dbReference>
<dbReference type="GO" id="GO:0005737">
    <property type="term" value="C:cytoplasm"/>
    <property type="evidence" value="ECO:0007669"/>
    <property type="project" value="UniProtKB-SubCell"/>
</dbReference>
<dbReference type="GO" id="GO:0003725">
    <property type="term" value="F:double-stranded RNA binding"/>
    <property type="evidence" value="ECO:0007669"/>
    <property type="project" value="TreeGrafter"/>
</dbReference>
<dbReference type="GO" id="GO:0046872">
    <property type="term" value="F:metal ion binding"/>
    <property type="evidence" value="ECO:0007669"/>
    <property type="project" value="UniProtKB-KW"/>
</dbReference>
<dbReference type="GO" id="GO:0004525">
    <property type="term" value="F:ribonuclease III activity"/>
    <property type="evidence" value="ECO:0007669"/>
    <property type="project" value="UniProtKB-UniRule"/>
</dbReference>
<dbReference type="GO" id="GO:0019843">
    <property type="term" value="F:rRNA binding"/>
    <property type="evidence" value="ECO:0007669"/>
    <property type="project" value="UniProtKB-KW"/>
</dbReference>
<dbReference type="GO" id="GO:0006397">
    <property type="term" value="P:mRNA processing"/>
    <property type="evidence" value="ECO:0007669"/>
    <property type="project" value="UniProtKB-UniRule"/>
</dbReference>
<dbReference type="GO" id="GO:0010468">
    <property type="term" value="P:regulation of gene expression"/>
    <property type="evidence" value="ECO:0007669"/>
    <property type="project" value="TreeGrafter"/>
</dbReference>
<dbReference type="GO" id="GO:0006364">
    <property type="term" value="P:rRNA processing"/>
    <property type="evidence" value="ECO:0007669"/>
    <property type="project" value="UniProtKB-UniRule"/>
</dbReference>
<dbReference type="GO" id="GO:0008033">
    <property type="term" value="P:tRNA processing"/>
    <property type="evidence" value="ECO:0007669"/>
    <property type="project" value="UniProtKB-KW"/>
</dbReference>
<dbReference type="CDD" id="cd10845">
    <property type="entry name" value="DSRM_RNAse_III_family"/>
    <property type="match status" value="1"/>
</dbReference>
<dbReference type="CDD" id="cd00593">
    <property type="entry name" value="RIBOc"/>
    <property type="match status" value="1"/>
</dbReference>
<dbReference type="FunFam" id="1.10.1520.10:FF:000001">
    <property type="entry name" value="Ribonuclease 3"/>
    <property type="match status" value="1"/>
</dbReference>
<dbReference type="FunFam" id="3.30.160.20:FF:000003">
    <property type="entry name" value="Ribonuclease 3"/>
    <property type="match status" value="1"/>
</dbReference>
<dbReference type="Gene3D" id="3.30.160.20">
    <property type="match status" value="1"/>
</dbReference>
<dbReference type="Gene3D" id="1.10.1520.10">
    <property type="entry name" value="Ribonuclease III domain"/>
    <property type="match status" value="1"/>
</dbReference>
<dbReference type="HAMAP" id="MF_00104">
    <property type="entry name" value="RNase_III"/>
    <property type="match status" value="1"/>
</dbReference>
<dbReference type="InterPro" id="IPR014720">
    <property type="entry name" value="dsRBD_dom"/>
</dbReference>
<dbReference type="InterPro" id="IPR011907">
    <property type="entry name" value="RNase_III"/>
</dbReference>
<dbReference type="InterPro" id="IPR000999">
    <property type="entry name" value="RNase_III_dom"/>
</dbReference>
<dbReference type="InterPro" id="IPR036389">
    <property type="entry name" value="RNase_III_sf"/>
</dbReference>
<dbReference type="NCBIfam" id="TIGR02191">
    <property type="entry name" value="RNaseIII"/>
    <property type="match status" value="1"/>
</dbReference>
<dbReference type="PANTHER" id="PTHR11207:SF0">
    <property type="entry name" value="RIBONUCLEASE 3"/>
    <property type="match status" value="1"/>
</dbReference>
<dbReference type="PANTHER" id="PTHR11207">
    <property type="entry name" value="RIBONUCLEASE III"/>
    <property type="match status" value="1"/>
</dbReference>
<dbReference type="Pfam" id="PF00035">
    <property type="entry name" value="dsrm"/>
    <property type="match status" value="1"/>
</dbReference>
<dbReference type="Pfam" id="PF14622">
    <property type="entry name" value="Ribonucleas_3_3"/>
    <property type="match status" value="1"/>
</dbReference>
<dbReference type="SMART" id="SM00358">
    <property type="entry name" value="DSRM"/>
    <property type="match status" value="1"/>
</dbReference>
<dbReference type="SMART" id="SM00535">
    <property type="entry name" value="RIBOc"/>
    <property type="match status" value="1"/>
</dbReference>
<dbReference type="SUPFAM" id="SSF54768">
    <property type="entry name" value="dsRNA-binding domain-like"/>
    <property type="match status" value="1"/>
</dbReference>
<dbReference type="SUPFAM" id="SSF69065">
    <property type="entry name" value="RNase III domain-like"/>
    <property type="match status" value="1"/>
</dbReference>
<dbReference type="PROSITE" id="PS50137">
    <property type="entry name" value="DS_RBD"/>
    <property type="match status" value="1"/>
</dbReference>
<dbReference type="PROSITE" id="PS00517">
    <property type="entry name" value="RNASE_3_1"/>
    <property type="match status" value="1"/>
</dbReference>
<dbReference type="PROSITE" id="PS50142">
    <property type="entry name" value="RNASE_3_2"/>
    <property type="match status" value="1"/>
</dbReference>
<name>RNC_GLAP5</name>
<reference key="1">
    <citation type="journal article" date="2009" name="J. Bacteriol.">
        <title>Complete genome sequence of Haemophilus parasuis SH0165.</title>
        <authorList>
            <person name="Yue M."/>
            <person name="Yang F."/>
            <person name="Yang J."/>
            <person name="Bei W."/>
            <person name="Cai X."/>
            <person name="Chen L."/>
            <person name="Dong J."/>
            <person name="Zhou R."/>
            <person name="Jin M."/>
            <person name="Jin Q."/>
            <person name="Chen H."/>
        </authorList>
    </citation>
    <scope>NUCLEOTIDE SEQUENCE [LARGE SCALE GENOMIC DNA]</scope>
    <source>
        <strain>SH0165</strain>
    </source>
</reference>
<sequence>MQLERLQKKLGYQFANLDYLTQALTHRSAASKNNERLEFLGDSILNFAIGKALYEKFPKANEGELSRMRAALVKEQTLAVVARQFELGEYMKLGAGELKSGGYRRESILSDCVEAIIAAVYLDAGIDRAMERVHCWYQQLLNDMQLGEAQKDPKTRLQEYLQGRKLPLPTYEVIDIKGEAHNQTFKVSCKVEKVDEIFIGNGTSRRKAEQDAALQVIKVLGIK</sequence>
<proteinExistence type="inferred from homology"/>
<organism>
    <name type="scientific">Glaesserella parasuis serovar 5 (strain SH0165)</name>
    <name type="common">Haemophilus parasuis</name>
    <dbReference type="NCBI Taxonomy" id="557723"/>
    <lineage>
        <taxon>Bacteria</taxon>
        <taxon>Pseudomonadati</taxon>
        <taxon>Pseudomonadota</taxon>
        <taxon>Gammaproteobacteria</taxon>
        <taxon>Pasteurellales</taxon>
        <taxon>Pasteurellaceae</taxon>
        <taxon>Glaesserella</taxon>
    </lineage>
</organism>